<dbReference type="EC" id="1.1.1.17" evidence="1"/>
<dbReference type="EMBL" id="BA000037">
    <property type="protein sequence ID" value="BAC93268.1"/>
    <property type="molecule type" value="Genomic_DNA"/>
</dbReference>
<dbReference type="RefSeq" id="WP_011149418.1">
    <property type="nucleotide sequence ID" value="NC_005139.1"/>
</dbReference>
<dbReference type="SMR" id="Q7MP60"/>
<dbReference type="STRING" id="672.VV93_v1c04720"/>
<dbReference type="KEGG" id="vvy:VV0504"/>
<dbReference type="PATRIC" id="fig|196600.6.peg.528"/>
<dbReference type="eggNOG" id="COG0246">
    <property type="taxonomic scope" value="Bacteria"/>
</dbReference>
<dbReference type="HOGENOM" id="CLU_036089_2_0_6"/>
<dbReference type="Proteomes" id="UP000002675">
    <property type="component" value="Chromosome I"/>
</dbReference>
<dbReference type="GO" id="GO:0005829">
    <property type="term" value="C:cytosol"/>
    <property type="evidence" value="ECO:0007669"/>
    <property type="project" value="TreeGrafter"/>
</dbReference>
<dbReference type="GO" id="GO:0008926">
    <property type="term" value="F:mannitol-1-phosphate 5-dehydrogenase activity"/>
    <property type="evidence" value="ECO:0007669"/>
    <property type="project" value="UniProtKB-UniRule"/>
</dbReference>
<dbReference type="GO" id="GO:0019592">
    <property type="term" value="P:mannitol catabolic process"/>
    <property type="evidence" value="ECO:0007669"/>
    <property type="project" value="TreeGrafter"/>
</dbReference>
<dbReference type="FunFam" id="1.10.1040.10:FF:000009">
    <property type="entry name" value="Mannitol-1-phosphate 5-dehydrogenase"/>
    <property type="match status" value="1"/>
</dbReference>
<dbReference type="FunFam" id="3.40.50.720:FF:000075">
    <property type="entry name" value="Mannitol-1-phosphate 5-dehydrogenase"/>
    <property type="match status" value="1"/>
</dbReference>
<dbReference type="Gene3D" id="1.10.1040.10">
    <property type="entry name" value="N-(1-d-carboxylethyl)-l-norvaline Dehydrogenase, domain 2"/>
    <property type="match status" value="1"/>
</dbReference>
<dbReference type="Gene3D" id="3.40.50.720">
    <property type="entry name" value="NAD(P)-binding Rossmann-like Domain"/>
    <property type="match status" value="1"/>
</dbReference>
<dbReference type="HAMAP" id="MF_00196">
    <property type="entry name" value="Mannitol_dehydrog"/>
    <property type="match status" value="1"/>
</dbReference>
<dbReference type="InterPro" id="IPR008927">
    <property type="entry name" value="6-PGluconate_DH-like_C_sf"/>
</dbReference>
<dbReference type="InterPro" id="IPR013328">
    <property type="entry name" value="6PGD_dom2"/>
</dbReference>
<dbReference type="InterPro" id="IPR023028">
    <property type="entry name" value="Mannitol_1_phos_5_DH"/>
</dbReference>
<dbReference type="InterPro" id="IPR000669">
    <property type="entry name" value="Mannitol_DH"/>
</dbReference>
<dbReference type="InterPro" id="IPR013118">
    <property type="entry name" value="Mannitol_DH_C"/>
</dbReference>
<dbReference type="InterPro" id="IPR023027">
    <property type="entry name" value="Mannitol_DH_CS"/>
</dbReference>
<dbReference type="InterPro" id="IPR013131">
    <property type="entry name" value="Mannitol_DH_N"/>
</dbReference>
<dbReference type="InterPro" id="IPR036291">
    <property type="entry name" value="NAD(P)-bd_dom_sf"/>
</dbReference>
<dbReference type="NCBIfam" id="NF002646">
    <property type="entry name" value="PRK02318.1-2"/>
    <property type="match status" value="1"/>
</dbReference>
<dbReference type="NCBIfam" id="NF002647">
    <property type="entry name" value="PRK02318.1-3"/>
    <property type="match status" value="1"/>
</dbReference>
<dbReference type="NCBIfam" id="NF002650">
    <property type="entry name" value="PRK02318.2-2"/>
    <property type="match status" value="1"/>
</dbReference>
<dbReference type="NCBIfam" id="NF002652">
    <property type="entry name" value="PRK02318.2-5"/>
    <property type="match status" value="1"/>
</dbReference>
<dbReference type="PANTHER" id="PTHR30524:SF0">
    <property type="entry name" value="ALTRONATE OXIDOREDUCTASE-RELATED"/>
    <property type="match status" value="1"/>
</dbReference>
<dbReference type="PANTHER" id="PTHR30524">
    <property type="entry name" value="MANNITOL-1-PHOSPHATE 5-DEHYDROGENASE"/>
    <property type="match status" value="1"/>
</dbReference>
<dbReference type="Pfam" id="PF01232">
    <property type="entry name" value="Mannitol_dh"/>
    <property type="match status" value="1"/>
</dbReference>
<dbReference type="Pfam" id="PF08125">
    <property type="entry name" value="Mannitol_dh_C"/>
    <property type="match status" value="1"/>
</dbReference>
<dbReference type="PRINTS" id="PR00084">
    <property type="entry name" value="MTLDHDRGNASE"/>
</dbReference>
<dbReference type="SUPFAM" id="SSF48179">
    <property type="entry name" value="6-phosphogluconate dehydrogenase C-terminal domain-like"/>
    <property type="match status" value="1"/>
</dbReference>
<dbReference type="SUPFAM" id="SSF51735">
    <property type="entry name" value="NAD(P)-binding Rossmann-fold domains"/>
    <property type="match status" value="1"/>
</dbReference>
<dbReference type="PROSITE" id="PS00974">
    <property type="entry name" value="MANNITOL_DHGENASE"/>
    <property type="match status" value="1"/>
</dbReference>
<feature type="chain" id="PRO_0000170732" description="Mannitol-1-phosphate 5-dehydrogenase">
    <location>
        <begin position="1"/>
        <end position="382"/>
    </location>
</feature>
<feature type="binding site" evidence="1">
    <location>
        <begin position="4"/>
        <end position="15"/>
    </location>
    <ligand>
        <name>NAD(+)</name>
        <dbReference type="ChEBI" id="CHEBI:57540"/>
    </ligand>
</feature>
<name>MTLD_VIBVY</name>
<organism>
    <name type="scientific">Vibrio vulnificus (strain YJ016)</name>
    <dbReference type="NCBI Taxonomy" id="196600"/>
    <lineage>
        <taxon>Bacteria</taxon>
        <taxon>Pseudomonadati</taxon>
        <taxon>Pseudomonadota</taxon>
        <taxon>Gammaproteobacteria</taxon>
        <taxon>Vibrionales</taxon>
        <taxon>Vibrionaceae</taxon>
        <taxon>Vibrio</taxon>
    </lineage>
</organism>
<sequence length="382" mass="41985">MKNAVHFGAGNIGRGFIGKLLADANVSVTFADVDAPLVDQLSHRQEYKVKVVGSECQIDTVTHVTAVNSASEEVIDRIVQTDLVTTAVGPNVLDIIAKTIAQGIAKRFAAGNLAPLNIIACENMVRGTTHLKGEVYKHLDASLHAQVDELVGFVDSAVDRIVPPAEAANDDPLEVTVESFSEWIVDEQQFKGEVPSIAGMEKTHNLMAFVERKLFTLNTGHCITAYLGCLQGHRTIREAIENPAICDQVKQAMMESGEVLIRRYGFDREMHQAYIEKILARFANPFLVDEVDRVGRQPIRKLGMNDRLIKPLLGTIEFGTANQHLLKGIAAALKYQNDSDPQAVELQRSLQQVGVKKTLAKYTSLAEDSVEVAKIETLYNQL</sequence>
<evidence type="ECO:0000255" key="1">
    <source>
        <dbReference type="HAMAP-Rule" id="MF_00196"/>
    </source>
</evidence>
<proteinExistence type="inferred from homology"/>
<gene>
    <name evidence="1" type="primary">mtlD</name>
    <name type="ordered locus">VV0504</name>
</gene>
<accession>Q7MP60</accession>
<protein>
    <recommendedName>
        <fullName evidence="1">Mannitol-1-phosphate 5-dehydrogenase</fullName>
        <ecNumber evidence="1">1.1.1.17</ecNumber>
    </recommendedName>
</protein>
<comment type="catalytic activity">
    <reaction evidence="1">
        <text>D-mannitol 1-phosphate + NAD(+) = beta-D-fructose 6-phosphate + NADH + H(+)</text>
        <dbReference type="Rhea" id="RHEA:19661"/>
        <dbReference type="ChEBI" id="CHEBI:15378"/>
        <dbReference type="ChEBI" id="CHEBI:57540"/>
        <dbReference type="ChEBI" id="CHEBI:57634"/>
        <dbReference type="ChEBI" id="CHEBI:57945"/>
        <dbReference type="ChEBI" id="CHEBI:61381"/>
        <dbReference type="EC" id="1.1.1.17"/>
    </reaction>
</comment>
<comment type="similarity">
    <text evidence="1">Belongs to the mannitol dehydrogenase family.</text>
</comment>
<keyword id="KW-0520">NAD</keyword>
<keyword id="KW-0560">Oxidoreductase</keyword>
<reference key="1">
    <citation type="journal article" date="2003" name="Genome Res.">
        <title>Comparative genome analysis of Vibrio vulnificus, a marine pathogen.</title>
        <authorList>
            <person name="Chen C.-Y."/>
            <person name="Wu K.-M."/>
            <person name="Chang Y.-C."/>
            <person name="Chang C.-H."/>
            <person name="Tsai H.-C."/>
            <person name="Liao T.-L."/>
            <person name="Liu Y.-M."/>
            <person name="Chen H.-J."/>
            <person name="Shen A.B.-T."/>
            <person name="Li J.-C."/>
            <person name="Su T.-L."/>
            <person name="Shao C.-P."/>
            <person name="Lee C.-T."/>
            <person name="Hor L.-I."/>
            <person name="Tsai S.-F."/>
        </authorList>
    </citation>
    <scope>NUCLEOTIDE SEQUENCE [LARGE SCALE GENOMIC DNA]</scope>
    <source>
        <strain>YJ016</strain>
    </source>
</reference>